<dbReference type="ConoServer" id="3748">
    <property type="toxin name" value="Tx3g"/>
</dbReference>
<dbReference type="GO" id="GO:0005576">
    <property type="term" value="C:extracellular region"/>
    <property type="evidence" value="ECO:0007669"/>
    <property type="project" value="UniProtKB-SubCell"/>
</dbReference>
<dbReference type="GO" id="GO:0090729">
    <property type="term" value="F:toxin activity"/>
    <property type="evidence" value="ECO:0007669"/>
    <property type="project" value="UniProtKB-KW"/>
</dbReference>
<comment type="subcellular location">
    <subcellularLocation>
        <location evidence="3">Secreted</location>
    </subcellularLocation>
</comment>
<comment type="tissue specificity">
    <text evidence="3">Expressed by the venom duct.</text>
</comment>
<comment type="domain">
    <text>The cysteine framework is III (CC-C-C-CC). Classified in the M-2 branch, since 2 residues stand between the fourth and the fifth cysteine residues.</text>
</comment>
<comment type="PTM">
    <text>Contains 3 disulfide bonds.</text>
</comment>
<comment type="mass spectrometry"/>
<comment type="similarity">
    <text evidence="4">Belongs to the conotoxin M superfamily.</text>
</comment>
<accession>P86263</accession>
<proteinExistence type="evidence at protein level"/>
<feature type="peptide" id="PRO_0000371278" description="Conotoxin 5">
    <location>
        <begin position="1"/>
        <end position="19"/>
    </location>
</feature>
<feature type="disulfide bond" evidence="2">
    <location>
        <begin position="2"/>
        <end position="18"/>
    </location>
</feature>
<feature type="disulfide bond" evidence="2">
    <location>
        <begin position="3"/>
        <end position="14"/>
    </location>
</feature>
<feature type="disulfide bond" evidence="2">
    <location>
        <begin position="8"/>
        <end position="17"/>
    </location>
</feature>
<keyword id="KW-0903">Direct protein sequencing</keyword>
<keyword id="KW-1015">Disulfide bond</keyword>
<keyword id="KW-0964">Secreted</keyword>
<keyword id="KW-0800">Toxin</keyword>
<evidence type="ECO:0000250" key="1">
    <source>
        <dbReference type="UniProtKB" id="P0C424"/>
    </source>
</evidence>
<evidence type="ECO:0000250" key="2">
    <source>
        <dbReference type="UniProtKB" id="P0CI24"/>
    </source>
</evidence>
<evidence type="ECO:0000269" key="3">
    <source>
    </source>
</evidence>
<evidence type="ECO:0000305" key="4"/>
<organism>
    <name type="scientific">Conus textile</name>
    <name type="common">Cloth-of-gold cone</name>
    <dbReference type="NCBI Taxonomy" id="6494"/>
    <lineage>
        <taxon>Eukaryota</taxon>
        <taxon>Metazoa</taxon>
        <taxon>Spiralia</taxon>
        <taxon>Lophotrochozoa</taxon>
        <taxon>Mollusca</taxon>
        <taxon>Gastropoda</taxon>
        <taxon>Caenogastropoda</taxon>
        <taxon>Neogastropoda</taxon>
        <taxon>Conoidea</taxon>
        <taxon>Conidae</taxon>
        <taxon>Conus</taxon>
        <taxon>Cylinder</taxon>
    </lineage>
</organism>
<protein>
    <recommendedName>
        <fullName evidence="1">Conotoxin 5</fullName>
    </recommendedName>
</protein>
<reference key="1">
    <citation type="journal article" date="2009" name="Proc. Natl. Acad. Sci. U.S.A.">
        <title>Rapid sensitive analysis of cysteine rich peptide venom components.</title>
        <authorList>
            <person name="Ueberheide B.M."/>
            <person name="Fenyo D."/>
            <person name="Alewood P.F."/>
            <person name="Chait B.T."/>
        </authorList>
    </citation>
    <scope>PROTEIN SEQUENCE</scope>
    <scope>SUBCELLULAR LOCATION</scope>
    <scope>TISSUE SPECIFICITY</scope>
    <scope>MASS SPECTROMETRY</scope>
    <scope>DISULFIDE BONDS</scope>
    <source>
        <tissue>Venom</tissue>
    </source>
</reference>
<sequence>GCCHPSTCHVRKGCSRCCS</sequence>
<name>M5_CONTE</name>